<accession>D6C4I8</accession>
<keyword id="KW-0165">Cleavage on pair of basic residues</keyword>
<keyword id="KW-1015">Disulfide bond</keyword>
<keyword id="KW-0528">Neurotoxin</keyword>
<keyword id="KW-0964">Secreted</keyword>
<keyword id="KW-0732">Signal</keyword>
<keyword id="KW-0800">Toxin</keyword>
<reference key="1">
    <citation type="journal article" date="2010" name="Mol. Phylogenet. Evol.">
        <title>Evolution of Conus peptide toxins: analysis of Conus californicus Reeve, 1844.</title>
        <authorList>
            <person name="Biggs J.S."/>
            <person name="Watkins M."/>
            <person name="Puillandre N."/>
            <person name="Ownby J.P."/>
            <person name="Lopez-Vera E."/>
            <person name="Christensen S."/>
            <person name="Moreno K.J."/>
            <person name="Bernaldez J."/>
            <person name="Licea-Navarro A."/>
            <person name="Corneli P.S."/>
            <person name="Olivera B.M."/>
        </authorList>
    </citation>
    <scope>NUCLEOTIDE SEQUENCE [GENOMIC DNA]</scope>
</reference>
<protein>
    <recommendedName>
        <fullName evidence="3">Conotoxin Cl14.1b</fullName>
    </recommendedName>
    <alternativeName>
        <fullName evidence="4">Cal14.1b</fullName>
    </alternativeName>
</protein>
<feature type="signal peptide" evidence="2">
    <location>
        <begin position="1"/>
        <end position="19"/>
    </location>
</feature>
<feature type="propeptide" id="PRO_0000415012" evidence="1">
    <location>
        <begin position="20"/>
        <end position="47"/>
    </location>
</feature>
<feature type="peptide" id="PRO_0000415013" description="Conotoxin Cl14.1b" evidence="4">
    <location>
        <begin position="50"/>
        <end position="66"/>
    </location>
</feature>
<dbReference type="EMBL" id="FJ959130">
    <property type="protein sequence ID" value="ADB93100.1"/>
    <property type="molecule type" value="Genomic_DNA"/>
</dbReference>
<dbReference type="ConoServer" id="4016">
    <property type="toxin name" value="Cal14.1b precursor"/>
</dbReference>
<dbReference type="GO" id="GO:0005576">
    <property type="term" value="C:extracellular region"/>
    <property type="evidence" value="ECO:0007669"/>
    <property type="project" value="UniProtKB-SubCell"/>
</dbReference>
<dbReference type="GO" id="GO:0090729">
    <property type="term" value="F:toxin activity"/>
    <property type="evidence" value="ECO:0007669"/>
    <property type="project" value="UniProtKB-KW"/>
</dbReference>
<comment type="subcellular location">
    <subcellularLocation>
        <location evidence="4">Secreted</location>
    </subcellularLocation>
</comment>
<comment type="tissue specificity">
    <text evidence="4">Expressed by the venom duct.</text>
</comment>
<comment type="domain">
    <text evidence="4">The cysteine framework is XIV (C-C-C-C).</text>
</comment>
<comment type="PTM">
    <text evidence="1">Contains 2 disulfide bonds.</text>
</comment>
<comment type="similarity">
    <text evidence="4">Belongs to the conotoxin L superfamily.</text>
</comment>
<proteinExistence type="inferred from homology"/>
<sequence length="66" mass="7229">MNVTVMFLVLLLTMPLTDGFNIRAINGGELFGLVQRDAGNALDHGFYRRGDCPPWCVGARCRAGKC</sequence>
<organism>
    <name type="scientific">Californiconus californicus</name>
    <name type="common">California cone</name>
    <name type="synonym">Conus californicus</name>
    <dbReference type="NCBI Taxonomy" id="1736779"/>
    <lineage>
        <taxon>Eukaryota</taxon>
        <taxon>Metazoa</taxon>
        <taxon>Spiralia</taxon>
        <taxon>Lophotrochozoa</taxon>
        <taxon>Mollusca</taxon>
        <taxon>Gastropoda</taxon>
        <taxon>Caenogastropoda</taxon>
        <taxon>Neogastropoda</taxon>
        <taxon>Conoidea</taxon>
        <taxon>Conidae</taxon>
        <taxon>Californiconus</taxon>
    </lineage>
</organism>
<name>CLE1B_CONCL</name>
<evidence type="ECO:0000250" key="1"/>
<evidence type="ECO:0000255" key="2"/>
<evidence type="ECO:0000303" key="3">
    <source>
    </source>
</evidence>
<evidence type="ECO:0000305" key="4"/>